<keyword id="KW-0002">3D-structure</keyword>
<keyword id="KW-0963">Cytoplasm</keyword>
<keyword id="KW-0903">Direct protein sequencing</keyword>
<keyword id="KW-0597">Phosphoprotein</keyword>
<keyword id="KW-1267">Proteomics identification</keyword>
<keyword id="KW-1185">Reference proteome</keyword>
<keyword id="KW-0727">SH2 domain</keyword>
<accession>Q13094</accession>
<accession>A8KA25</accession>
<accession>Q53XV4</accession>
<proteinExistence type="evidence at protein level"/>
<reference key="1">
    <citation type="journal article" date="1995" name="J. Biol. Chem.">
        <title>Molecular cloning of SLP-76, a 76-kDa tyrosine phosphoprotein associated with Grb2 in T cells.</title>
        <authorList>
            <person name="Jackman J.K."/>
            <person name="Motto D.G."/>
            <person name="Sun Q."/>
            <person name="Tanemoto M."/>
            <person name="Turck C.W."/>
            <person name="Peltz G.A."/>
            <person name="Koretzky G.A."/>
            <person name="Findell P.R."/>
        </authorList>
    </citation>
    <scope>NUCLEOTIDE SEQUENCE [MRNA]</scope>
    <scope>PARTIAL PROTEIN SEQUENCE</scope>
    <scope>INTERACTION WITH GRB2</scope>
    <source>
        <tissue>Leukemia</tissue>
    </source>
</reference>
<reference key="2">
    <citation type="submission" date="2003-05" db="EMBL/GenBank/DDBJ databases">
        <title>Cloning of human full-length CDSs in BD Creator(TM) system donor vector.</title>
        <authorList>
            <person name="Kalnine N."/>
            <person name="Chen X."/>
            <person name="Rolfs A."/>
            <person name="Halleck A."/>
            <person name="Hines L."/>
            <person name="Eisenstein S."/>
            <person name="Koundinya M."/>
            <person name="Raphael J."/>
            <person name="Moreira D."/>
            <person name="Kelley T."/>
            <person name="LaBaer J."/>
            <person name="Lin Y."/>
            <person name="Phelan M."/>
            <person name="Farmer A."/>
        </authorList>
    </citation>
    <scope>NUCLEOTIDE SEQUENCE [LARGE SCALE MRNA]</scope>
</reference>
<reference key="3">
    <citation type="journal article" date="2004" name="Nat. Genet.">
        <title>Complete sequencing and characterization of 21,243 full-length human cDNAs.</title>
        <authorList>
            <person name="Ota T."/>
            <person name="Suzuki Y."/>
            <person name="Nishikawa T."/>
            <person name="Otsuki T."/>
            <person name="Sugiyama T."/>
            <person name="Irie R."/>
            <person name="Wakamatsu A."/>
            <person name="Hayashi K."/>
            <person name="Sato H."/>
            <person name="Nagai K."/>
            <person name="Kimura K."/>
            <person name="Makita H."/>
            <person name="Sekine M."/>
            <person name="Obayashi M."/>
            <person name="Nishi T."/>
            <person name="Shibahara T."/>
            <person name="Tanaka T."/>
            <person name="Ishii S."/>
            <person name="Yamamoto J."/>
            <person name="Saito K."/>
            <person name="Kawai Y."/>
            <person name="Isono Y."/>
            <person name="Nakamura Y."/>
            <person name="Nagahari K."/>
            <person name="Murakami K."/>
            <person name="Yasuda T."/>
            <person name="Iwayanagi T."/>
            <person name="Wagatsuma M."/>
            <person name="Shiratori A."/>
            <person name="Sudo H."/>
            <person name="Hosoiri T."/>
            <person name="Kaku Y."/>
            <person name="Kodaira H."/>
            <person name="Kondo H."/>
            <person name="Sugawara M."/>
            <person name="Takahashi M."/>
            <person name="Kanda K."/>
            <person name="Yokoi T."/>
            <person name="Furuya T."/>
            <person name="Kikkawa E."/>
            <person name="Omura Y."/>
            <person name="Abe K."/>
            <person name="Kamihara K."/>
            <person name="Katsuta N."/>
            <person name="Sato K."/>
            <person name="Tanikawa M."/>
            <person name="Yamazaki M."/>
            <person name="Ninomiya K."/>
            <person name="Ishibashi T."/>
            <person name="Yamashita H."/>
            <person name="Murakawa K."/>
            <person name="Fujimori K."/>
            <person name="Tanai H."/>
            <person name="Kimata M."/>
            <person name="Watanabe M."/>
            <person name="Hiraoka S."/>
            <person name="Chiba Y."/>
            <person name="Ishida S."/>
            <person name="Ono Y."/>
            <person name="Takiguchi S."/>
            <person name="Watanabe S."/>
            <person name="Yosida M."/>
            <person name="Hotuta T."/>
            <person name="Kusano J."/>
            <person name="Kanehori K."/>
            <person name="Takahashi-Fujii A."/>
            <person name="Hara H."/>
            <person name="Tanase T.-O."/>
            <person name="Nomura Y."/>
            <person name="Togiya S."/>
            <person name="Komai F."/>
            <person name="Hara R."/>
            <person name="Takeuchi K."/>
            <person name="Arita M."/>
            <person name="Imose N."/>
            <person name="Musashino K."/>
            <person name="Yuuki H."/>
            <person name="Oshima A."/>
            <person name="Sasaki N."/>
            <person name="Aotsuka S."/>
            <person name="Yoshikawa Y."/>
            <person name="Matsunawa H."/>
            <person name="Ichihara T."/>
            <person name="Shiohata N."/>
            <person name="Sano S."/>
            <person name="Moriya S."/>
            <person name="Momiyama H."/>
            <person name="Satoh N."/>
            <person name="Takami S."/>
            <person name="Terashima Y."/>
            <person name="Suzuki O."/>
            <person name="Nakagawa S."/>
            <person name="Senoh A."/>
            <person name="Mizoguchi H."/>
            <person name="Goto Y."/>
            <person name="Shimizu F."/>
            <person name="Wakebe H."/>
            <person name="Hishigaki H."/>
            <person name="Watanabe T."/>
            <person name="Sugiyama A."/>
            <person name="Takemoto M."/>
            <person name="Kawakami B."/>
            <person name="Yamazaki M."/>
            <person name="Watanabe K."/>
            <person name="Kumagai A."/>
            <person name="Itakura S."/>
            <person name="Fukuzumi Y."/>
            <person name="Fujimori Y."/>
            <person name="Komiyama M."/>
            <person name="Tashiro H."/>
            <person name="Tanigami A."/>
            <person name="Fujiwara T."/>
            <person name="Ono T."/>
            <person name="Yamada K."/>
            <person name="Fujii Y."/>
            <person name="Ozaki K."/>
            <person name="Hirao M."/>
            <person name="Ohmori Y."/>
            <person name="Kawabata A."/>
            <person name="Hikiji T."/>
            <person name="Kobatake N."/>
            <person name="Inagaki H."/>
            <person name="Ikema Y."/>
            <person name="Okamoto S."/>
            <person name="Okitani R."/>
            <person name="Kawakami T."/>
            <person name="Noguchi S."/>
            <person name="Itoh T."/>
            <person name="Shigeta K."/>
            <person name="Senba T."/>
            <person name="Matsumura K."/>
            <person name="Nakajima Y."/>
            <person name="Mizuno T."/>
            <person name="Morinaga M."/>
            <person name="Sasaki M."/>
            <person name="Togashi T."/>
            <person name="Oyama M."/>
            <person name="Hata H."/>
            <person name="Watanabe M."/>
            <person name="Komatsu T."/>
            <person name="Mizushima-Sugano J."/>
            <person name="Satoh T."/>
            <person name="Shirai Y."/>
            <person name="Takahashi Y."/>
            <person name="Nakagawa K."/>
            <person name="Okumura K."/>
            <person name="Nagase T."/>
            <person name="Nomura N."/>
            <person name="Kikuchi H."/>
            <person name="Masuho Y."/>
            <person name="Yamashita R."/>
            <person name="Nakai K."/>
            <person name="Yada T."/>
            <person name="Nakamura Y."/>
            <person name="Ohara O."/>
            <person name="Isogai T."/>
            <person name="Sugano S."/>
        </authorList>
    </citation>
    <scope>NUCLEOTIDE SEQUENCE [LARGE SCALE MRNA]</scope>
    <scope>VARIANT CYS-410</scope>
    <source>
        <tissue>Trachea</tissue>
    </source>
</reference>
<reference key="4">
    <citation type="submission" date="2005-09" db="EMBL/GenBank/DDBJ databases">
        <authorList>
            <person name="Mural R.J."/>
            <person name="Istrail S."/>
            <person name="Sutton G.G."/>
            <person name="Florea L."/>
            <person name="Halpern A.L."/>
            <person name="Mobarry C.M."/>
            <person name="Lippert R."/>
            <person name="Walenz B."/>
            <person name="Shatkay H."/>
            <person name="Dew I."/>
            <person name="Miller J.R."/>
            <person name="Flanigan M.J."/>
            <person name="Edwards N.J."/>
            <person name="Bolanos R."/>
            <person name="Fasulo D."/>
            <person name="Halldorsson B.V."/>
            <person name="Hannenhalli S."/>
            <person name="Turner R."/>
            <person name="Yooseph S."/>
            <person name="Lu F."/>
            <person name="Nusskern D.R."/>
            <person name="Shue B.C."/>
            <person name="Zheng X.H."/>
            <person name="Zhong F."/>
            <person name="Delcher A.L."/>
            <person name="Huson D.H."/>
            <person name="Kravitz S.A."/>
            <person name="Mouchard L."/>
            <person name="Reinert K."/>
            <person name="Remington K.A."/>
            <person name="Clark A.G."/>
            <person name="Waterman M.S."/>
            <person name="Eichler E.E."/>
            <person name="Adams M.D."/>
            <person name="Hunkapiller M.W."/>
            <person name="Myers E.W."/>
            <person name="Venter J.C."/>
        </authorList>
    </citation>
    <scope>NUCLEOTIDE SEQUENCE [LARGE SCALE GENOMIC DNA]</scope>
</reference>
<reference key="5">
    <citation type="journal article" date="2004" name="Genome Res.">
        <title>The status, quality, and expansion of the NIH full-length cDNA project: the Mammalian Gene Collection (MGC).</title>
        <authorList>
            <consortium name="The MGC Project Team"/>
        </authorList>
    </citation>
    <scope>NUCLEOTIDE SEQUENCE [LARGE SCALE MRNA]</scope>
    <source>
        <tissue>Prostate</tissue>
    </source>
</reference>
<reference key="6">
    <citation type="journal article" date="1996" name="J. Biol. Chem.">
        <title>Phosphorylation of SLP-76 by the ZAP-70 protein-tyrosine kinase is required for T-cell receptor function.</title>
        <authorList>
            <person name="Bubeck Wardenburg J."/>
            <person name="Fu C."/>
            <person name="Jackman J.K."/>
            <person name="Flotow H."/>
            <person name="Wilkinson S.E."/>
            <person name="Williams D.H."/>
            <person name="Johnson R."/>
            <person name="Kong G."/>
            <person name="Chan A.C."/>
            <person name="Findell P.R."/>
        </authorList>
    </citation>
    <scope>FUNCTION</scope>
    <scope>PHOSPHORYLATION BY ZAP70</scope>
</reference>
<reference key="7">
    <citation type="journal article" date="1996" name="Immunity">
        <title>Vav and SLP-76 interact and functionally cooperate in IL-2 gene activation.</title>
        <authorList>
            <person name="Wu J."/>
            <person name="Motto D.G."/>
            <person name="Koretzky G.A."/>
            <person name="Weiss A."/>
        </authorList>
    </citation>
    <scope>FUNCTION</scope>
    <scope>INTERACTION WITH VAV1</scope>
</reference>
<reference key="8">
    <citation type="journal article" date="2001" name="J. Immunol.">
        <title>ZAP-70 and SLP-76 regulate protein kinase C-theta and NF-kappa B activation in response to engagement of CD3 and CD28.</title>
        <authorList>
            <person name="Herndon T.M."/>
            <person name="Shan X.C."/>
            <person name="Tsokos G.C."/>
            <person name="Wange R.L."/>
        </authorList>
    </citation>
    <scope>FUNCTION</scope>
</reference>
<reference key="9">
    <citation type="journal article" date="2001" name="J. Biol. Chem.">
        <title>PRAM-1 is a novel adaptor protein regulated by retinoic acid (RA) and promyelocytic leukemia (PML)-RA receptor alpha in acute promyelocytic leukemia cells.</title>
        <authorList>
            <person name="Moog-Lutz C."/>
            <person name="Peterson E.J."/>
            <person name="Lutz P.G."/>
            <person name="Eliason S."/>
            <person name="Cave-Riant F."/>
            <person name="Singer A."/>
            <person name="Di Gioia Y."/>
            <person name="Dmovski S."/>
            <person name="Kamens J."/>
            <person name="Cayre Y.E."/>
            <person name="Koretzky G."/>
        </authorList>
    </citation>
    <scope>INTERACTION WITH PRAM1</scope>
</reference>
<reference key="10">
    <citation type="journal article" date="2002" name="Eur. J. Biochem.">
        <title>Shb links SLP-76 and Vav with the CD3 complex in Jurkat T cells.</title>
        <authorList>
            <person name="Lindholm C.K."/>
            <person name="Henriksson M.L."/>
            <person name="Hallberg B."/>
            <person name="Welsh M."/>
        </authorList>
    </citation>
    <scope>INTERACTION WITH SHB</scope>
    <scope>DOMAIN</scope>
</reference>
<reference key="11">
    <citation type="journal article" date="2004" name="Anal. Chem.">
        <title>Robust phosphoproteomic profiling of tyrosine phosphorylation sites from human T cells using immobilized metal affinity chromatography and tandem mass spectrometry.</title>
        <authorList>
            <person name="Brill L.M."/>
            <person name="Salomon A.R."/>
            <person name="Ficarro S.B."/>
            <person name="Mukherji M."/>
            <person name="Stettler-Gill M."/>
            <person name="Peters E.C."/>
        </authorList>
    </citation>
    <scope>PHOSPHORYLATION [LARGE SCALE ANALYSIS] AT SER-207</scope>
    <scope>IDENTIFICATION BY MASS SPECTROMETRY [LARGE SCALE ANALYSIS]</scope>
    <source>
        <tissue>Leukemic T-cell</tissue>
    </source>
</reference>
<reference key="12">
    <citation type="journal article" date="2004" name="FEBS Lett.">
        <title>Association of the Src homology 2 domain-containing leukocyte phosphoprotein of 76 kD (SLP-76) with the p85 subunit of phosphoinositide 3-kinase.</title>
        <authorList>
            <person name="Shim E.K."/>
            <person name="Moon C.S."/>
            <person name="Lee G.Y."/>
            <person name="Ha Y.J."/>
            <person name="Chae S.K."/>
            <person name="Lee J.R."/>
        </authorList>
    </citation>
    <scope>PHOSPHORYLATION BY SYK</scope>
</reference>
<reference key="13">
    <citation type="journal article" date="2006" name="Mol. Cell. Biol.">
        <title>CD6 regulates T-cell responses through activation-dependent recruitment of the positive regulator SLP-76.</title>
        <authorList>
            <person name="Hassan N.J."/>
            <person name="Simmonds S.J."/>
            <person name="Clarkson N.G."/>
            <person name="Hanrahan S."/>
            <person name="Puklavec M.J."/>
            <person name="Bomb M."/>
            <person name="Barclay A.N."/>
            <person name="Brown M.H."/>
        </authorList>
    </citation>
    <scope>INTERACTION WITH CD6</scope>
    <scope>DOMAIN</scope>
</reference>
<reference key="14">
    <citation type="journal article" date="2008" name="J. Proteome Res.">
        <title>Phosphoproteome of resting human platelets.</title>
        <authorList>
            <person name="Zahedi R.P."/>
            <person name="Lewandrowski U."/>
            <person name="Wiesner J."/>
            <person name="Wortelkamp S."/>
            <person name="Moebius J."/>
            <person name="Schuetz C."/>
            <person name="Walter U."/>
            <person name="Gambaryan S."/>
            <person name="Sickmann A."/>
        </authorList>
    </citation>
    <scope>PHOSPHORYLATION [LARGE SCALE ANALYSIS] AT SER-207</scope>
    <scope>IDENTIFICATION BY MASS SPECTROMETRY [LARGE SCALE ANALYSIS]</scope>
    <source>
        <tissue>Platelet</tissue>
    </source>
</reference>
<reference key="15">
    <citation type="journal article" date="2011" name="EMBO J.">
        <title>Sequential phosphorylation of SLP-76 at tyrosine 173 is required for activation of T and mast cells.</title>
        <authorList>
            <person name="Sela M."/>
            <person name="Bogin Y."/>
            <person name="Beach D."/>
            <person name="Oellerich T."/>
            <person name="Lehne J."/>
            <person name="Smith-Garvin J.E."/>
            <person name="Okumura M."/>
            <person name="Starosvetsky E."/>
            <person name="Kosoff R."/>
            <person name="Libman E."/>
            <person name="Koretzky G."/>
            <person name="Kambayashi T."/>
            <person name="Urlaub H."/>
            <person name="Wienands J."/>
            <person name="Chernoff J."/>
            <person name="Yablonski D."/>
        </authorList>
    </citation>
    <scope>PHOSPHORYLATION BY ITK</scope>
</reference>
<reference key="16">
    <citation type="journal article" date="2013" name="J. Proteome Res.">
        <title>Toward a comprehensive characterization of a human cancer cell phosphoproteome.</title>
        <authorList>
            <person name="Zhou H."/>
            <person name="Di Palma S."/>
            <person name="Preisinger C."/>
            <person name="Peng M."/>
            <person name="Polat A.N."/>
            <person name="Heck A.J."/>
            <person name="Mohammed S."/>
        </authorList>
    </citation>
    <scope>PHOSPHORYLATION [LARGE SCALE ANALYSIS] AT SER-207</scope>
    <scope>IDENTIFICATION BY MASS SPECTROMETRY [LARGE SCALE ANALYSIS]</scope>
    <source>
        <tissue>Erythroleukemia</tissue>
    </source>
</reference>
<reference key="17">
    <citation type="journal article" date="2014" name="J. Proteomics">
        <title>An enzyme assisted RP-RPLC approach for in-depth analysis of human liver phosphoproteome.</title>
        <authorList>
            <person name="Bian Y."/>
            <person name="Song C."/>
            <person name="Cheng K."/>
            <person name="Dong M."/>
            <person name="Wang F."/>
            <person name="Huang J."/>
            <person name="Sun D."/>
            <person name="Wang L."/>
            <person name="Ye M."/>
            <person name="Zou H."/>
        </authorList>
    </citation>
    <scope>PHOSPHORYLATION [LARGE SCALE ANALYSIS] AT SER-207 AND SER-410</scope>
    <scope>IDENTIFICATION BY MASS SPECTROMETRY [LARGE SCALE ANALYSIS]</scope>
    <source>
        <tissue>Liver</tissue>
    </source>
</reference>
<reference key="18">
    <citation type="journal article" date="2014" name="Nat. Immunol.">
        <title>Quantitative proteomics analysis of signalosome dynamics in primary T cells identifies the surface receptor CD6 as a Lat adaptor-independent TCR signaling hub.</title>
        <authorList>
            <person name="Roncagalli R."/>
            <person name="Hauri S."/>
            <person name="Fiore F."/>
            <person name="Liang Y."/>
            <person name="Chen Z."/>
            <person name="Sansoni A."/>
            <person name="Kanduri K."/>
            <person name="Joly R."/>
            <person name="Malzac A."/>
            <person name="Laehdesmaeki H."/>
            <person name="Lahesmaa R."/>
            <person name="Yamasaki S."/>
            <person name="Saito T."/>
            <person name="Malissen M."/>
            <person name="Aebersold R."/>
            <person name="Gstaiger M."/>
            <person name="Malissen B."/>
        </authorList>
    </citation>
    <scope>INTERACTION WITH CD6</scope>
</reference>
<reference key="19">
    <citation type="journal article" date="2016" name="J. Immunol.">
        <title>ARAP, a novel adaptor protein, is required for TCR signaling and integrin-mediated adhesion.</title>
        <authorList>
            <person name="Jung S.H."/>
            <person name="Yoo E.H."/>
            <person name="Yu M.J."/>
            <person name="Song H.M."/>
            <person name="Kang H.Y."/>
            <person name="Cho J.Y."/>
            <person name="Lee J.R."/>
        </authorList>
    </citation>
    <scope>INTERACTION WITH FYB2 AND FYB1</scope>
</reference>
<reference key="20">
    <citation type="journal article" date="2021" name="J. Exp. Med.">
        <title>Inherited SLP76 deficiency in humans causes severe combined immunodeficiency, neutrophil and platelet defects.</title>
        <authorList>
            <person name="Lev A."/>
            <person name="Lee Y.N."/>
            <person name="Sun G."/>
            <person name="Hallumi E."/>
            <person name="Simon A.J."/>
            <person name="Zrihen K.S."/>
            <person name="Levy S."/>
            <person name="Beit Halevi T."/>
            <person name="Papazian M."/>
            <person name="Shwartz N."/>
            <person name="Somekh I."/>
            <person name="Levy-Mendelovich S."/>
            <person name="Wolach B."/>
            <person name="Gavrieli R."/>
            <person name="Vernitsky H."/>
            <person name="Barel O."/>
            <person name="Javasky E."/>
            <person name="Stauber T."/>
            <person name="Ma C.A."/>
            <person name="Zhang Y."/>
            <person name="Amariglio N."/>
            <person name="Rechavi G."/>
            <person name="Hendel A."/>
            <person name="Yablonski D."/>
            <person name="Milner J.D."/>
            <person name="Somech R."/>
        </authorList>
    </citation>
    <scope>INVOLVEMENT IN IMD81</scope>
</reference>
<reference key="21">
    <citation type="journal article" date="2021" name="Nat. Commun.">
        <title>Targeting adaptor protein SLP76 of RAGE as a therapeutic approach for lethal sepsis.</title>
        <authorList>
            <person name="Yan Z."/>
            <person name="Luo H."/>
            <person name="Xie B."/>
            <person name="Tian T."/>
            <person name="Li S."/>
            <person name="Chen Z."/>
            <person name="Liu J."/>
            <person name="Zhao X."/>
            <person name="Zhang L."/>
            <person name="Deng Y."/>
            <person name="Billiar T.R."/>
            <person name="Jiang Y."/>
        </authorList>
    </citation>
    <scope>FUNCTION</scope>
    <scope>INTERACTION WITH AGER</scope>
    <scope>SUBCELLULAR LOCATION</scope>
</reference>
<reference key="22">
    <citation type="submission" date="2008-02" db="PDB data bank">
        <title>Solution structure of the N-terminal SAM-domain of human lymphocyte cytosolic protein 2.</title>
        <authorList>
            <consortium name="RIKEN structural genomics initiative (RSGI)"/>
        </authorList>
    </citation>
    <scope>STRUCTURE BY NMR OF 1-83</scope>
</reference>
<reference evidence="21" key="23">
    <citation type="journal article" date="2021" name="FEBS Lett.">
        <title>The 14-3-3/SLP76 protein-protein interaction in T-cell receptor signalling: a structural and biophysical characterization.</title>
        <authorList>
            <person name="Soini L."/>
            <person name="Leysen S."/>
            <person name="Davis J."/>
            <person name="Westwood M."/>
            <person name="Ottmann C."/>
        </authorList>
    </citation>
    <scope>X-RAY CRYSTALLOGRAPHY (1.53 ANGSTROMS) OF 371-380</scope>
    <scope>INTERACTION WITH YWHAZ</scope>
    <scope>FUNCTION</scope>
    <scope>PHOSPHORYLATION AT SER-376</scope>
</reference>
<dbReference type="EMBL" id="U20158">
    <property type="protein sequence ID" value="AAC50135.1"/>
    <property type="molecule type" value="mRNA"/>
</dbReference>
<dbReference type="EMBL" id="BT007273">
    <property type="protein sequence ID" value="AAP35937.1"/>
    <property type="molecule type" value="mRNA"/>
</dbReference>
<dbReference type="EMBL" id="AK292890">
    <property type="protein sequence ID" value="BAF85579.1"/>
    <property type="molecule type" value="mRNA"/>
</dbReference>
<dbReference type="EMBL" id="CH471062">
    <property type="protein sequence ID" value="EAW61479.1"/>
    <property type="molecule type" value="Genomic_DNA"/>
</dbReference>
<dbReference type="EMBL" id="BC016618">
    <property type="protein sequence ID" value="AAH16618.1"/>
    <property type="molecule type" value="mRNA"/>
</dbReference>
<dbReference type="CCDS" id="CCDS47339.1"/>
<dbReference type="PIR" id="A56110">
    <property type="entry name" value="A56110"/>
</dbReference>
<dbReference type="RefSeq" id="NP_005556.1">
    <property type="nucleotide sequence ID" value="NM_005565.5"/>
</dbReference>
<dbReference type="PDB" id="1H3H">
    <property type="method" value="NMR"/>
    <property type="chains" value="B=232-241"/>
</dbReference>
<dbReference type="PDB" id="1YWO">
    <property type="method" value="X-ray"/>
    <property type="resolution" value="1.81 A"/>
    <property type="chains" value="P=185-194"/>
</dbReference>
<dbReference type="PDB" id="2EAP">
    <property type="method" value="NMR"/>
    <property type="chains" value="A=1-83"/>
</dbReference>
<dbReference type="PDB" id="2ROR">
    <property type="method" value="NMR"/>
    <property type="chains" value="B=122-136"/>
</dbReference>
<dbReference type="PDB" id="6ZCJ">
    <property type="method" value="X-ray"/>
    <property type="resolution" value="1.53 A"/>
    <property type="chains" value="P=371-380"/>
</dbReference>
<dbReference type="PDBsum" id="1H3H"/>
<dbReference type="PDBsum" id="1YWO"/>
<dbReference type="PDBsum" id="2EAP"/>
<dbReference type="PDBsum" id="2ROR"/>
<dbReference type="PDBsum" id="6ZCJ"/>
<dbReference type="SMR" id="Q13094"/>
<dbReference type="BioGRID" id="110129">
    <property type="interactions" value="47"/>
</dbReference>
<dbReference type="CORUM" id="Q13094"/>
<dbReference type="DIP" id="DIP-31812N"/>
<dbReference type="FunCoup" id="Q13094">
    <property type="interactions" value="727"/>
</dbReference>
<dbReference type="IntAct" id="Q13094">
    <property type="interactions" value="52"/>
</dbReference>
<dbReference type="MINT" id="Q13094"/>
<dbReference type="STRING" id="9606.ENSP00000046794"/>
<dbReference type="BindingDB" id="Q13094"/>
<dbReference type="GlyGen" id="Q13094">
    <property type="glycosylation" value="1 site, 1 O-linked glycan (1 site)"/>
</dbReference>
<dbReference type="iPTMnet" id="Q13094"/>
<dbReference type="PhosphoSitePlus" id="Q13094"/>
<dbReference type="BioMuta" id="LCP2"/>
<dbReference type="DMDM" id="10720065"/>
<dbReference type="MassIVE" id="Q13094"/>
<dbReference type="PaxDb" id="9606-ENSP00000046794"/>
<dbReference type="PeptideAtlas" id="Q13094"/>
<dbReference type="ProteomicsDB" id="59146"/>
<dbReference type="Pumba" id="Q13094"/>
<dbReference type="Antibodypedia" id="3884">
    <property type="antibodies" value="713 antibodies from 43 providers"/>
</dbReference>
<dbReference type="DNASU" id="3937"/>
<dbReference type="Ensembl" id="ENST00000046794.10">
    <property type="protein sequence ID" value="ENSP00000046794.5"/>
    <property type="gene ID" value="ENSG00000043462.13"/>
</dbReference>
<dbReference type="GeneID" id="3937"/>
<dbReference type="KEGG" id="hsa:3937"/>
<dbReference type="MANE-Select" id="ENST00000046794.10">
    <property type="protein sequence ID" value="ENSP00000046794.5"/>
    <property type="RefSeq nucleotide sequence ID" value="NM_005565.5"/>
    <property type="RefSeq protein sequence ID" value="NP_005556.1"/>
</dbReference>
<dbReference type="UCSC" id="uc003man.2">
    <property type="organism name" value="human"/>
</dbReference>
<dbReference type="AGR" id="HGNC:6529"/>
<dbReference type="CTD" id="3937"/>
<dbReference type="DisGeNET" id="3937"/>
<dbReference type="GeneCards" id="LCP2"/>
<dbReference type="HGNC" id="HGNC:6529">
    <property type="gene designation" value="LCP2"/>
</dbReference>
<dbReference type="HPA" id="ENSG00000043462">
    <property type="expression patterns" value="Group enriched (bone marrow, lymphoid tissue)"/>
</dbReference>
<dbReference type="MalaCards" id="LCP2"/>
<dbReference type="MIM" id="601603">
    <property type="type" value="gene"/>
</dbReference>
<dbReference type="MIM" id="619374">
    <property type="type" value="phenotype"/>
</dbReference>
<dbReference type="neXtProt" id="NX_Q13094"/>
<dbReference type="OpenTargets" id="ENSG00000043462"/>
<dbReference type="PharmGKB" id="PA30313"/>
<dbReference type="VEuPathDB" id="HostDB:ENSG00000043462"/>
<dbReference type="eggNOG" id="ENOG502QV3T">
    <property type="taxonomic scope" value="Eukaryota"/>
</dbReference>
<dbReference type="GeneTree" id="ENSGT00940000156835"/>
<dbReference type="HOGENOM" id="CLU_040430_0_0_1"/>
<dbReference type="InParanoid" id="Q13094"/>
<dbReference type="OMA" id="GSRNQCM"/>
<dbReference type="OrthoDB" id="9934029at2759"/>
<dbReference type="PAN-GO" id="Q13094">
    <property type="GO annotations" value="2 GO annotations based on evolutionary models"/>
</dbReference>
<dbReference type="PhylomeDB" id="Q13094"/>
<dbReference type="TreeFam" id="TF326567"/>
<dbReference type="PathwayCommons" id="Q13094"/>
<dbReference type="Reactome" id="R-HSA-114604">
    <property type="pathway name" value="GPVI-mediated activation cascade"/>
</dbReference>
<dbReference type="Reactome" id="R-HSA-202433">
    <property type="pathway name" value="Generation of second messenger molecules"/>
</dbReference>
<dbReference type="Reactome" id="R-HSA-2424491">
    <property type="pathway name" value="DAP12 signaling"/>
</dbReference>
<dbReference type="Reactome" id="R-HSA-2871796">
    <property type="pathway name" value="FCERI mediated MAPK activation"/>
</dbReference>
<dbReference type="Reactome" id="R-HSA-2871809">
    <property type="pathway name" value="FCERI mediated Ca+2 mobilization"/>
</dbReference>
<dbReference type="SignaLink" id="Q13094"/>
<dbReference type="SIGNOR" id="Q13094"/>
<dbReference type="BioGRID-ORCS" id="3937">
    <property type="hits" value="21 hits in 1160 CRISPR screens"/>
</dbReference>
<dbReference type="CD-CODE" id="1070A586">
    <property type="entry name" value="Synthetic Condensate 000045"/>
</dbReference>
<dbReference type="CD-CODE" id="C05F05FE">
    <property type="entry name" value="Synthetic Condensate 000079"/>
</dbReference>
<dbReference type="CD-CODE" id="F345034F">
    <property type="entry name" value="Signaling cluster"/>
</dbReference>
<dbReference type="ChiTaRS" id="LCP2">
    <property type="organism name" value="human"/>
</dbReference>
<dbReference type="EvolutionaryTrace" id="Q13094"/>
<dbReference type="GeneWiki" id="Lymphocyte_cytosolic_protein_2"/>
<dbReference type="GenomeRNAi" id="3937"/>
<dbReference type="Pharos" id="Q13094">
    <property type="development level" value="Tbio"/>
</dbReference>
<dbReference type="PRO" id="PR:Q13094"/>
<dbReference type="Proteomes" id="UP000005640">
    <property type="component" value="Chromosome 5"/>
</dbReference>
<dbReference type="RNAct" id="Q13094">
    <property type="molecule type" value="protein"/>
</dbReference>
<dbReference type="Bgee" id="ENSG00000043462">
    <property type="expression patterns" value="Expressed in monocyte and 185 other cell types or tissues"/>
</dbReference>
<dbReference type="ExpressionAtlas" id="Q13094">
    <property type="expression patterns" value="baseline and differential"/>
</dbReference>
<dbReference type="GO" id="GO:0005911">
    <property type="term" value="C:cell-cell junction"/>
    <property type="evidence" value="ECO:0007669"/>
    <property type="project" value="Ensembl"/>
</dbReference>
<dbReference type="GO" id="GO:0005829">
    <property type="term" value="C:cytosol"/>
    <property type="evidence" value="ECO:0000314"/>
    <property type="project" value="UniProtKB"/>
</dbReference>
<dbReference type="GO" id="GO:0044853">
    <property type="term" value="C:plasma membrane raft"/>
    <property type="evidence" value="ECO:0000314"/>
    <property type="project" value="UniProtKB"/>
</dbReference>
<dbReference type="GO" id="GO:0036398">
    <property type="term" value="C:TCR signalosome"/>
    <property type="evidence" value="ECO:0000314"/>
    <property type="project" value="UniProtKB"/>
</dbReference>
<dbReference type="GO" id="GO:0007169">
    <property type="term" value="P:cell surface receptor protein tyrosine kinase signaling pathway"/>
    <property type="evidence" value="ECO:0000318"/>
    <property type="project" value="GO_Central"/>
</dbReference>
<dbReference type="GO" id="GO:0006955">
    <property type="term" value="P:immune response"/>
    <property type="evidence" value="ECO:0000304"/>
    <property type="project" value="ProtInc"/>
</dbReference>
<dbReference type="GO" id="GO:0035556">
    <property type="term" value="P:intracellular signal transduction"/>
    <property type="evidence" value="ECO:0000318"/>
    <property type="project" value="GO_Central"/>
</dbReference>
<dbReference type="GO" id="GO:0045576">
    <property type="term" value="P:mast cell activation"/>
    <property type="evidence" value="ECO:0007669"/>
    <property type="project" value="Ensembl"/>
</dbReference>
<dbReference type="GO" id="GO:0045860">
    <property type="term" value="P:positive regulation of protein kinase activity"/>
    <property type="evidence" value="ECO:0000270"/>
    <property type="project" value="CACAO"/>
</dbReference>
<dbReference type="GO" id="GO:0050852">
    <property type="term" value="P:T cell receptor signaling pathway"/>
    <property type="evidence" value="ECO:0000314"/>
    <property type="project" value="UniProtKB"/>
</dbReference>
<dbReference type="CDD" id="cd09522">
    <property type="entry name" value="SAM_SLP76"/>
    <property type="match status" value="1"/>
</dbReference>
<dbReference type="CDD" id="cd09929">
    <property type="entry name" value="SH2_BLNK_SLP-76"/>
    <property type="match status" value="1"/>
</dbReference>
<dbReference type="FunFam" id="3.30.505.10:FF:000016">
    <property type="entry name" value="B-cell linker protein isoform 2"/>
    <property type="match status" value="1"/>
</dbReference>
<dbReference type="FunFam" id="1.10.150.50:FF:000051">
    <property type="entry name" value="Lymphocyte cytosolic protein 2"/>
    <property type="match status" value="1"/>
</dbReference>
<dbReference type="Gene3D" id="3.30.505.10">
    <property type="entry name" value="SH2 domain"/>
    <property type="match status" value="1"/>
</dbReference>
<dbReference type="Gene3D" id="1.10.150.50">
    <property type="entry name" value="Transcription Factor, Ets-1"/>
    <property type="match status" value="1"/>
</dbReference>
<dbReference type="IDEAL" id="IID00318"/>
<dbReference type="InterPro" id="IPR051751">
    <property type="entry name" value="Immunoreceptor_sig_adapters"/>
</dbReference>
<dbReference type="InterPro" id="IPR001660">
    <property type="entry name" value="SAM"/>
</dbReference>
<dbReference type="InterPro" id="IPR013761">
    <property type="entry name" value="SAM/pointed_sf"/>
</dbReference>
<dbReference type="InterPro" id="IPR000980">
    <property type="entry name" value="SH2"/>
</dbReference>
<dbReference type="InterPro" id="IPR036860">
    <property type="entry name" value="SH2_dom_sf"/>
</dbReference>
<dbReference type="PANTHER" id="PTHR14098:SF1">
    <property type="entry name" value="LYMPHOCYTE CYTOSOLIC PROTEIN 2"/>
    <property type="match status" value="1"/>
</dbReference>
<dbReference type="PANTHER" id="PTHR14098">
    <property type="entry name" value="SH2 DOMAIN CONTAINING PROTEIN"/>
    <property type="match status" value="1"/>
</dbReference>
<dbReference type="Pfam" id="PF07647">
    <property type="entry name" value="SAM_2"/>
    <property type="match status" value="1"/>
</dbReference>
<dbReference type="Pfam" id="PF00017">
    <property type="entry name" value="SH2"/>
    <property type="match status" value="1"/>
</dbReference>
<dbReference type="SMART" id="SM00454">
    <property type="entry name" value="SAM"/>
    <property type="match status" value="1"/>
</dbReference>
<dbReference type="SMART" id="SM00252">
    <property type="entry name" value="SH2"/>
    <property type="match status" value="1"/>
</dbReference>
<dbReference type="SUPFAM" id="SSF47769">
    <property type="entry name" value="SAM/Pointed domain"/>
    <property type="match status" value="1"/>
</dbReference>
<dbReference type="SUPFAM" id="SSF55550">
    <property type="entry name" value="SH2 domain"/>
    <property type="match status" value="1"/>
</dbReference>
<dbReference type="PROSITE" id="PS50001">
    <property type="entry name" value="SH2"/>
    <property type="match status" value="1"/>
</dbReference>
<feature type="chain" id="PRO_0000084368" description="Lymphocyte cytosolic protein 2">
    <location>
        <begin position="1"/>
        <end position="533"/>
    </location>
</feature>
<feature type="domain" description="SAM">
    <location>
        <begin position="15"/>
        <end position="81"/>
    </location>
</feature>
<feature type="domain" description="SH2" evidence="2">
    <location>
        <begin position="422"/>
        <end position="530"/>
    </location>
</feature>
<feature type="region of interest" description="Disordered" evidence="3">
    <location>
        <begin position="78"/>
        <end position="417"/>
    </location>
</feature>
<feature type="compositionally biased region" description="Acidic residues" evidence="3">
    <location>
        <begin position="108"/>
        <end position="155"/>
    </location>
</feature>
<feature type="compositionally biased region" description="Pro residues" evidence="3">
    <location>
        <begin position="184"/>
        <end position="213"/>
    </location>
</feature>
<feature type="compositionally biased region" description="Polar residues" evidence="3">
    <location>
        <begin position="337"/>
        <end position="350"/>
    </location>
</feature>
<feature type="compositionally biased region" description="Polar residues" evidence="3">
    <location>
        <begin position="365"/>
        <end position="376"/>
    </location>
</feature>
<feature type="compositionally biased region" description="Pro residues" evidence="3">
    <location>
        <begin position="400"/>
        <end position="411"/>
    </location>
</feature>
<feature type="modified residue" description="Phosphotyrosine" evidence="1">
    <location>
        <position position="23"/>
    </location>
</feature>
<feature type="modified residue" description="Phosphoserine" evidence="22 23 24 25">
    <location>
        <position position="207"/>
    </location>
</feature>
<feature type="modified residue" description="Phosphoserine" evidence="14">
    <location>
        <position position="376"/>
    </location>
</feature>
<feature type="modified residue" description="Phosphoserine" evidence="25">
    <location>
        <position position="410"/>
    </location>
</feature>
<feature type="sequence variant" id="VAR_070803" description="In dbSNP:rs34192428." evidence="7">
    <original>S</original>
    <variation>C</variation>
    <location>
        <position position="410"/>
    </location>
</feature>
<feature type="sequence conflict" description="In Ref. 3; BAF85579." evidence="20" ref="3">
    <original>S</original>
    <variation>G</variation>
    <location>
        <position position="19"/>
    </location>
</feature>
<feature type="strand" evidence="27">
    <location>
        <begin position="1"/>
        <end position="4"/>
    </location>
</feature>
<feature type="helix" evidence="27">
    <location>
        <begin position="9"/>
        <end position="12"/>
    </location>
</feature>
<feature type="turn" evidence="27">
    <location>
        <begin position="17"/>
        <end position="19"/>
    </location>
</feature>
<feature type="helix" evidence="27">
    <location>
        <begin position="20"/>
        <end position="26"/>
    </location>
</feature>
<feature type="helix" evidence="27">
    <location>
        <begin position="30"/>
        <end position="38"/>
    </location>
</feature>
<feature type="helix" evidence="27">
    <location>
        <begin position="43"/>
        <end position="47"/>
    </location>
</feature>
<feature type="helix" evidence="27">
    <location>
        <begin position="51"/>
        <end position="54"/>
    </location>
</feature>
<feature type="turn" evidence="27">
    <location>
        <begin position="59"/>
        <end position="61"/>
    </location>
</feature>
<feature type="helix" evidence="27">
    <location>
        <begin position="62"/>
        <end position="73"/>
    </location>
</feature>
<feature type="helix" evidence="26">
    <location>
        <begin position="237"/>
        <end position="239"/>
    </location>
</feature>
<organism>
    <name type="scientific">Homo sapiens</name>
    <name type="common">Human</name>
    <dbReference type="NCBI Taxonomy" id="9606"/>
    <lineage>
        <taxon>Eukaryota</taxon>
        <taxon>Metazoa</taxon>
        <taxon>Chordata</taxon>
        <taxon>Craniata</taxon>
        <taxon>Vertebrata</taxon>
        <taxon>Euteleostomi</taxon>
        <taxon>Mammalia</taxon>
        <taxon>Eutheria</taxon>
        <taxon>Euarchontoglires</taxon>
        <taxon>Primates</taxon>
        <taxon>Haplorrhini</taxon>
        <taxon>Catarrhini</taxon>
        <taxon>Hominidae</taxon>
        <taxon>Homo</taxon>
    </lineage>
</organism>
<gene>
    <name type="primary">LCP2</name>
</gene>
<comment type="function">
    <text evidence="5 16 18 19">Adapter protein primarily involved in signaling pathways within T-cells, as well as other immune cells such as platelets, mast cells, and natural killer (NK) cells (PubMed:11313406, PubMed:33159816). Plays a crucial role for transducing signal from the T-cell receptor (TCR) after antigen recognition leading to T-cell activation. Mechanistically, once phosphorylated by the kinase ZAP70, mediates interactions with the guanine-nucleotide exchange factor VAV1, the adapter protein NCK and the kinase ITK (PubMed:8673706, PubMed:8702662). In turn, stimulates the activation of PKC-theta/PRKCQ and NF-kappa-B transcriptional activity in response to CD3 and CD28 costimulation (PubMed:11313406). Also plays an essential role in AGER-induced signaling pathways including p38 MAPK and ERK1/2 activation leading to cytokine release and pro-inflammatory responses (PubMed:33436632).</text>
</comment>
<comment type="subunit">
    <text evidence="1 4 6 8 10 12 13 14 16 17">Interacts with SLA. Interacts with CBLB (By similarity). Interacts with GRB2 (PubMed:7706237). Interacts with SHB (PubMed:12084069). Interacts with PRAM1 (PubMed:11301322). Interacts (via SH2 domain) with CD6 (via tyrosine phosphorylated C-terminus) (PubMed:16914752, PubMed:24584089). Interacts with FYB1 and the phosphorylated form of FYB2 (PubMed:27335501). Interacts with 14-3-3 adapter/YWHAZ; this phosphorylation leads to YWHAZ proteolytic degradation (PubMed:33159816). Interacts with VAV1; this interaction plays a role in TCR-mediated cytokine production (PubMed:15144186). Interacts with AGER; this interaction plays an important role in AGER-mediated pro-inflammatory responses and cytokine release (PubMed:33436632).</text>
</comment>
<comment type="interaction">
    <interactant intactId="EBI-346946">
        <id>Q13094</id>
    </interactant>
    <interactant intactId="EBI-2873748">
        <id>P30203</id>
        <label>CD6</label>
    </interactant>
    <organismsDiffer>false</organismsDiffer>
    <experiments>3</experiments>
</comment>
<comment type="interaction">
    <interactant intactId="EBI-346946">
        <id>Q13094</id>
    </interactant>
    <interactant intactId="EBI-297353">
        <id>P00533</id>
        <label>EGFR</label>
    </interactant>
    <organismsDiffer>false</organismsDiffer>
    <experiments>3</experiments>
</comment>
<comment type="interaction">
    <interactant intactId="EBI-346946">
        <id>Q13094</id>
    </interactant>
    <interactant intactId="EBI-12821617">
        <id>Q9H5J4</id>
        <label>ELOVL6</label>
    </interactant>
    <organismsDiffer>false</organismsDiffer>
    <experiments>3</experiments>
</comment>
<comment type="interaction">
    <interactant intactId="EBI-346946">
        <id>Q13094</id>
    </interactant>
    <interactant intactId="EBI-740459">
        <id>P51116</id>
        <label>FXR2</label>
    </interactant>
    <organismsDiffer>false</organismsDiffer>
    <experiments>7</experiments>
</comment>
<comment type="interaction">
    <interactant intactId="EBI-346946">
        <id>Q13094</id>
    </interactant>
    <interactant intactId="EBI-1753267">
        <id>O15117</id>
        <label>FYB1</label>
    </interactant>
    <organismsDiffer>false</organismsDiffer>
    <experiments>9</experiments>
</comment>
<comment type="interaction">
    <interactant intactId="EBI-346946">
        <id>Q13094</id>
    </interactant>
    <interactant intactId="EBI-618309">
        <id>Q08379</id>
        <label>GOLGA2</label>
    </interactant>
    <organismsDiffer>false</organismsDiffer>
    <experiments>6</experiments>
</comment>
<comment type="interaction">
    <interactant intactId="EBI-346946">
        <id>Q13094</id>
    </interactant>
    <interactant intactId="EBI-740418">
        <id>O75791</id>
        <label>GRAP2</label>
    </interactant>
    <organismsDiffer>false</organismsDiffer>
    <experiments>49</experiments>
</comment>
<comment type="interaction">
    <interactant intactId="EBI-346946">
        <id>Q13094</id>
    </interactant>
    <interactant intactId="EBI-401755">
        <id>P62993</id>
        <label>GRB2</label>
    </interactant>
    <organismsDiffer>false</organismsDiffer>
    <experiments>18</experiments>
</comment>
<comment type="interaction">
    <interactant intactId="EBI-346946">
        <id>Q13094</id>
    </interactant>
    <interactant intactId="EBI-968552">
        <id>Q08881</id>
        <label>ITK</label>
    </interactant>
    <organismsDiffer>false</organismsDiffer>
    <experiments>3</experiments>
</comment>
<comment type="interaction">
    <interactant intactId="EBI-346946">
        <id>Q13094</id>
    </interactant>
    <interactant intactId="EBI-739832">
        <id>Q8TBB1</id>
        <label>LNX1</label>
    </interactant>
    <organismsDiffer>false</organismsDiffer>
    <experiments>3</experiments>
</comment>
<comment type="interaction">
    <interactant intactId="EBI-346946">
        <id>Q13094</id>
    </interactant>
    <interactant intactId="EBI-1758170">
        <id>Q8IVH8</id>
        <label>MAP4K3</label>
    </interactant>
    <organismsDiffer>false</organismsDiffer>
    <experiments>5</experiments>
</comment>
<comment type="interaction">
    <interactant intactId="EBI-346946">
        <id>Q13094</id>
    </interactant>
    <interactant intactId="EBI-389883">
        <id>P16333</id>
        <label>NCK1</label>
    </interactant>
    <organismsDiffer>false</organismsDiffer>
    <experiments>21</experiments>
</comment>
<comment type="interaction">
    <interactant intactId="EBI-346946">
        <id>Q13094</id>
    </interactant>
    <interactant intactId="EBI-713635">
        <id>O43639</id>
        <label>NCK2</label>
    </interactant>
    <organismsDiffer>false</organismsDiffer>
    <experiments>10</experiments>
</comment>
<comment type="interaction">
    <interactant intactId="EBI-346946">
        <id>Q13094</id>
    </interactant>
    <interactant intactId="EBI-79387">
        <id>P19174</id>
        <label>PLCG1</label>
    </interactant>
    <organismsDiffer>false</organismsDiffer>
    <experiments>3</experiments>
</comment>
<comment type="interaction">
    <interactant intactId="EBI-346946">
        <id>Q13094</id>
    </interactant>
    <interactant intactId="EBI-752333">
        <id>Q92783</id>
        <label>STAM</label>
    </interactant>
    <organismsDiffer>false</organismsDiffer>
    <experiments>3</experiments>
</comment>
<comment type="interaction">
    <interactant intactId="EBI-346946">
        <id>Q13094</id>
    </interactant>
    <interactant intactId="EBI-373258">
        <id>O75886</id>
        <label>STAM2</label>
    </interactant>
    <organismsDiffer>false</organismsDiffer>
    <experiments>9</experiments>
</comment>
<comment type="interaction">
    <interactant intactId="EBI-346946">
        <id>Q13094</id>
    </interactant>
    <interactant intactId="EBI-625518">
        <id>P15498</id>
        <label>VAV1</label>
    </interactant>
    <organismsDiffer>false</organismsDiffer>
    <experiments>9</experiments>
</comment>
<comment type="interaction">
    <interactant intactId="EBI-346946">
        <id>Q13094</id>
    </interactant>
    <interactant intactId="EBI-642151">
        <id>O89100</id>
        <label>Grap2</label>
    </interactant>
    <organismsDiffer>true</organismsDiffer>
    <experiments>4</experiments>
</comment>
<comment type="interaction">
    <interactant intactId="EBI-346946">
        <id>Q13094</id>
    </interactant>
    <interactant intactId="EBI-5324222">
        <id>Q99JP0</id>
        <label>Map4k3</label>
    </interactant>
    <organismsDiffer>true</organismsDiffer>
    <experiments>2</experiments>
</comment>
<comment type="interaction">
    <interactant intactId="EBI-346946">
        <id>Q13094</id>
    </interactant>
    <interactant intactId="EBI-8013886">
        <id>P08487</id>
        <label>PLCG1</label>
    </interactant>
    <organismsDiffer>true</organismsDiffer>
    <experiments>5</experiments>
</comment>
<comment type="subcellular location">
    <subcellularLocation>
        <location evidence="20">Cytoplasm</location>
    </subcellularLocation>
</comment>
<comment type="tissue specificity">
    <text>Highly expressed in spleen, thymus and peripheral blood leukocytes. Highly expressed also in T-cell and monocytic cell lines, expressed at lower level in B-cell lines. Not detected in fibroblast or neuroblastoma cell lines.</text>
</comment>
<comment type="domain">
    <text evidence="6 10">The SH2 domain mediates interaction with phosphorylated CD6 (PubMed:16914752). The SH2 domain mediates interaction with SHB (PubMed:12084069).</text>
</comment>
<comment type="domain">
    <text evidence="10">Possesses an N-terminal acidic domain containing three tyrosine phosphorylation motifs, a central proline-rich region, and a C-terminal SH2 domain.</text>
</comment>
<comment type="PTM">
    <text evidence="9 11">Phosphorylated after T-cell receptor activation by ZAP70, ITK and TXK, which leads to the up-regulation of Th1 preferred cytokine IL-2. SYK-dependent phosphorylation is required for recruitment of PI3K signaling components.</text>
</comment>
<comment type="disease" evidence="15">
    <disease id="DI-06140">
        <name>Immunodeficiency 81</name>
        <acronym>IMD81</acronym>
        <description>An autosomal recessive disorder characterized by recurrent infections, including fungal infections, associated with T cell, neutrophil, and NK cell dysfunction. B cells may also show maturation abnormalities. Other features include autoimmune hemolytic anemia and abnormal platelet aggregation.</description>
        <dbReference type="MIM" id="619374"/>
    </disease>
    <text>The disease is caused by variants affecting the gene represented in this entry.</text>
</comment>
<protein>
    <recommendedName>
        <fullName>Lymphocyte cytosolic protein 2</fullName>
    </recommendedName>
    <alternativeName>
        <fullName>SH2 domain-containing leukocyte protein of 76 kDa</fullName>
    </alternativeName>
    <alternativeName>
        <fullName>SLP-76 tyrosine phosphoprotein</fullName>
        <shortName>SLP76</shortName>
    </alternativeName>
</protein>
<name>LCP2_HUMAN</name>
<sequence length="533" mass="60188">MALRNVPFRSEVLGWDPDSLADYFKKLNYKDCEKAVKKYHIDGARFLNLTENDIQKFPKLRVPILSKLSQEINKNEERRSIFTRKPQVPRFPEETESHEEDNGGWSSFEEDDYESPNDDQDGEDDGDYESPNEEEEAPVEDDADYEPPPSNDEEALQNSILPAKPFPNSNSMYIDRPPSGKTPQQPPVPPQRPMAALPPPPAGRNHSPLPPPQTNHEEPSRSRNHKTAKLPAPSIDRSTKPPLDRSLAPFDREPFTLGKKPPFSDKPSIPAGRSLGEHLPKIQKPPLPPTTERHERSSPLPGKKPPVPKHGWGPDRRENDEDDVHQRPLPQPALLPMSSNTFPSRSTKPSPMNPLPSSHMPGAFSESNSSFPQSASLPPYFSQGPSNRPPIRAEGRNFPLPLPNKPRPPSPAEEENSLNEEWYVSYITRPEAEAALRKINQDGTFLVRDSSKKTTTNPYVLMVLYKDKVYNIQIRYQKESQVYLLGTGLRGKEDFLSVSDIIDYFRKMPLLLIDGKNRGSRYQCTLTHAAGYP</sequence>
<evidence type="ECO:0000250" key="1">
    <source>
        <dbReference type="UniProtKB" id="Q60787"/>
    </source>
</evidence>
<evidence type="ECO:0000255" key="2">
    <source>
        <dbReference type="PROSITE-ProRule" id="PRU00191"/>
    </source>
</evidence>
<evidence type="ECO:0000256" key="3">
    <source>
        <dbReference type="SAM" id="MobiDB-lite"/>
    </source>
</evidence>
<evidence type="ECO:0000269" key="4">
    <source>
    </source>
</evidence>
<evidence type="ECO:0000269" key="5">
    <source>
    </source>
</evidence>
<evidence type="ECO:0000269" key="6">
    <source>
    </source>
</evidence>
<evidence type="ECO:0000269" key="7">
    <source>
    </source>
</evidence>
<evidence type="ECO:0000269" key="8">
    <source>
    </source>
</evidence>
<evidence type="ECO:0000269" key="9">
    <source>
    </source>
</evidence>
<evidence type="ECO:0000269" key="10">
    <source>
    </source>
</evidence>
<evidence type="ECO:0000269" key="11">
    <source>
    </source>
</evidence>
<evidence type="ECO:0000269" key="12">
    <source>
    </source>
</evidence>
<evidence type="ECO:0000269" key="13">
    <source>
    </source>
</evidence>
<evidence type="ECO:0000269" key="14">
    <source>
    </source>
</evidence>
<evidence type="ECO:0000269" key="15">
    <source>
    </source>
</evidence>
<evidence type="ECO:0000269" key="16">
    <source>
    </source>
</evidence>
<evidence type="ECO:0000269" key="17">
    <source>
    </source>
</evidence>
<evidence type="ECO:0000269" key="18">
    <source>
    </source>
</evidence>
<evidence type="ECO:0000269" key="19">
    <source>
    </source>
</evidence>
<evidence type="ECO:0000305" key="20"/>
<evidence type="ECO:0007744" key="21">
    <source>
        <dbReference type="PDB" id="6ZCJ"/>
    </source>
</evidence>
<evidence type="ECO:0007744" key="22">
    <source>
    </source>
</evidence>
<evidence type="ECO:0007744" key="23">
    <source>
    </source>
</evidence>
<evidence type="ECO:0007744" key="24">
    <source>
    </source>
</evidence>
<evidence type="ECO:0007744" key="25">
    <source>
    </source>
</evidence>
<evidence type="ECO:0007829" key="26">
    <source>
        <dbReference type="PDB" id="1H3H"/>
    </source>
</evidence>
<evidence type="ECO:0007829" key="27">
    <source>
        <dbReference type="PDB" id="2EAP"/>
    </source>
</evidence>